<gene>
    <name type="primary">NBL1</name>
    <name type="synonym">DAN</name>
</gene>
<proteinExistence type="evidence at transcript level"/>
<keyword id="KW-1015">Disulfide bond</keyword>
<keyword id="KW-1185">Reference proteome</keyword>
<keyword id="KW-0964">Secreted</keyword>
<keyword id="KW-0732">Signal</keyword>
<keyword id="KW-0043">Tumor suppressor</keyword>
<feature type="signal peptide" evidence="2">
    <location>
        <begin position="1"/>
        <end position="16"/>
    </location>
</feature>
<feature type="chain" id="PRO_0000364337" description="Neuroblastoma suppressor of tumorigenicity 1">
    <location>
        <begin position="17"/>
        <end position="177"/>
    </location>
</feature>
<feature type="domain" description="CTCK">
    <location>
        <begin position="34"/>
        <end position="123"/>
    </location>
</feature>
<feature type="region of interest" description="Disordered" evidence="3">
    <location>
        <begin position="143"/>
        <end position="177"/>
    </location>
</feature>
<feature type="disulfide bond" evidence="1">
    <location>
        <begin position="34"/>
        <end position="84"/>
    </location>
</feature>
<feature type="disulfide bond" evidence="1">
    <location>
        <begin position="48"/>
        <end position="98"/>
    </location>
</feature>
<feature type="disulfide bond" evidence="1">
    <location>
        <begin position="58"/>
        <end position="117"/>
    </location>
</feature>
<feature type="disulfide bond" evidence="1">
    <location>
        <begin position="62"/>
        <end position="119"/>
    </location>
</feature>
<feature type="disulfide bond" evidence="1">
    <location>
        <begin position="81"/>
        <end position="122"/>
    </location>
</feature>
<feature type="sequence conflict" description="In Ref. 2; AAM02975." evidence="6" ref="2">
    <original>GPHHYAHHQQEVEEPPA</original>
    <variation>SCYPSLCCIKLISLALS</variation>
    <location>
        <begin position="149"/>
        <end position="165"/>
    </location>
</feature>
<accession>Q90YC9</accession>
<accession>Q8QGI6</accession>
<dbReference type="EMBL" id="AB044337">
    <property type="protein sequence ID" value="BAB69043.1"/>
    <property type="status" value="ALT_INIT"/>
    <property type="molecule type" value="mRNA"/>
</dbReference>
<dbReference type="EMBL" id="AF421881">
    <property type="protein sequence ID" value="AAM02975.1"/>
    <property type="status" value="ALT_INIT"/>
    <property type="molecule type" value="mRNA"/>
</dbReference>
<dbReference type="SMR" id="Q90YC9"/>
<dbReference type="FunCoup" id="Q90YC9">
    <property type="interactions" value="175"/>
</dbReference>
<dbReference type="STRING" id="9031.ENSGALP00000058134"/>
<dbReference type="PaxDb" id="9031-ENSGALP00000038858"/>
<dbReference type="VEuPathDB" id="HostDB:geneid_373952"/>
<dbReference type="eggNOG" id="ENOG502RYP0">
    <property type="taxonomic scope" value="Eukaryota"/>
</dbReference>
<dbReference type="HOGENOM" id="CLU_115450_0_0_1"/>
<dbReference type="InParanoid" id="Q90YC9"/>
<dbReference type="OMA" id="HKHTEPH"/>
<dbReference type="OrthoDB" id="8196271at2759"/>
<dbReference type="PhylomeDB" id="Q90YC9"/>
<dbReference type="Proteomes" id="UP000000539">
    <property type="component" value="Unassembled WGS sequence"/>
</dbReference>
<dbReference type="GO" id="GO:0005615">
    <property type="term" value="C:extracellular space"/>
    <property type="evidence" value="ECO:0000318"/>
    <property type="project" value="GO_Central"/>
</dbReference>
<dbReference type="GO" id="GO:0036122">
    <property type="term" value="F:BMP binding"/>
    <property type="evidence" value="ECO:0000318"/>
    <property type="project" value="GO_Central"/>
</dbReference>
<dbReference type="GO" id="GO:0048018">
    <property type="term" value="F:receptor ligand activity"/>
    <property type="evidence" value="ECO:0000318"/>
    <property type="project" value="GO_Central"/>
</dbReference>
<dbReference type="GO" id="GO:0048752">
    <property type="term" value="P:semicircular canal morphogenesis"/>
    <property type="evidence" value="ECO:0000315"/>
    <property type="project" value="AgBase"/>
</dbReference>
<dbReference type="GO" id="GO:0038098">
    <property type="term" value="P:sequestering of BMP from receptor via BMP binding"/>
    <property type="evidence" value="ECO:0000318"/>
    <property type="project" value="GO_Central"/>
</dbReference>
<dbReference type="FunFam" id="2.10.90.10:FF:000016">
    <property type="entry name" value="Neuroblastoma suppressor of tumorigenicity 1"/>
    <property type="match status" value="1"/>
</dbReference>
<dbReference type="Gene3D" id="2.10.90.10">
    <property type="entry name" value="Cystine-knot cytokines"/>
    <property type="match status" value="1"/>
</dbReference>
<dbReference type="InterPro" id="IPR006207">
    <property type="entry name" value="Cys_knot_C"/>
</dbReference>
<dbReference type="InterPro" id="IPR029034">
    <property type="entry name" value="Cystine-knot_cytokine"/>
</dbReference>
<dbReference type="InterPro" id="IPR004133">
    <property type="entry name" value="DAN"/>
</dbReference>
<dbReference type="InterPro" id="IPR016728">
    <property type="entry name" value="Neuroblast_suppress_tumour_1"/>
</dbReference>
<dbReference type="PANTHER" id="PTHR15283">
    <property type="entry name" value="GREMLIN 1"/>
    <property type="match status" value="1"/>
</dbReference>
<dbReference type="PANTHER" id="PTHR15283:SF5">
    <property type="entry name" value="NEUROBLASTOMA SUPPRESSOR OF TUMORIGENICITY 1"/>
    <property type="match status" value="1"/>
</dbReference>
<dbReference type="Pfam" id="PF03045">
    <property type="entry name" value="DAN"/>
    <property type="match status" value="1"/>
</dbReference>
<dbReference type="PIRSF" id="PIRSF018557">
    <property type="entry name" value="DAN_sub"/>
    <property type="match status" value="1"/>
</dbReference>
<dbReference type="SMART" id="SM00041">
    <property type="entry name" value="CT"/>
    <property type="match status" value="1"/>
</dbReference>
<comment type="function">
    <text evidence="1">May act as a tumor suppressor.</text>
</comment>
<comment type="subcellular location">
    <subcellularLocation>
        <location evidence="1">Secreted</location>
    </subcellularLocation>
</comment>
<comment type="developmental stage">
    <text evidence="4 5">Expressed in head mesenchyme, somitic mesoderm and notochord at stages 8 and 9. Expressed in the presumptive otic vesicles at stage 9. Expressed in the somites, the entire notochord and the otic epithelium at stage 9. In the developing inner ear, expressed in the entire elongating endolymphatic duct and sac as well as the medial otic epithelium between stages 15 and 23. Expressed in the otic vesicle, somitic mesoderm and notochord at stage 13. Through the cranial region, expressed at the surface ectoderm, head mesenchyme, optic cups, roof plate of the forebrain and notochord at stage 13. In the paraxial mesoderm, expressed in the cranial region of the presomitic mesoderm at stage 13. In the somitic mesoderm, expressed in the somite before de-epithelialization and subsequently in the dermomyotome at stage 13. In the caudal region, expressed in the notochord, paraxial mesoderm and endoderm. Expressed in the optic cup, otic vesicle and somitic mesoderm stage 19. Expressed in the mesenchymal cells surrounding the optic cup and the surface ectoderm overlying the lens vesicle at stage 19. Expressed in the mesonephric ducts and tubules at stage 19. In the somatopleure and limb buds, expressed in the surface ectoderm and mesenchymal cells immediately beneath the surface ectoderm at stage 19. In the somitic mesoderm, expressed in the dermomyotome and lateral sclerotome at stage 19. Expressed in the branchial arches and maxillary process at stages 22 and 23. In the somitic mesoderm, expressed in the myotome at stage 24. In the limb buds, expressed in the anterior region of the fore- and hindlimb buds at stage 24. In the developing inner ear, expressed in the medial side of the utricle, the saccule, and the emerging cochlea at stage 27.</text>
</comment>
<comment type="similarity">
    <text evidence="6">Belongs to the DAN family.</text>
</comment>
<comment type="sequence caution" evidence="6">
    <conflict type="erroneous initiation">
        <sequence resource="EMBL-CDS" id="AAM02975"/>
    </conflict>
</comment>
<comment type="sequence caution" evidence="6">
    <conflict type="erroneous initiation">
        <sequence resource="EMBL-CDS" id="BAB69043"/>
    </conflict>
</comment>
<evidence type="ECO:0000250" key="1"/>
<evidence type="ECO:0000255" key="2"/>
<evidence type="ECO:0000256" key="3">
    <source>
        <dbReference type="SAM" id="MobiDB-lite"/>
    </source>
</evidence>
<evidence type="ECO:0000269" key="4">
    <source>
    </source>
</evidence>
<evidence type="ECO:0000269" key="5">
    <source>
    </source>
</evidence>
<evidence type="ECO:0000305" key="6"/>
<reference key="1">
    <citation type="journal article" date="2001" name="Mech. Dev.">
        <title>Expression of the Dan gene during chicken embryonic development.</title>
        <authorList>
            <person name="Ogita J."/>
            <person name="Isogai E."/>
            <person name="Sudo H."/>
            <person name="Sakiyama S."/>
            <person name="Nakagawara A."/>
            <person name="Koseki H."/>
        </authorList>
    </citation>
    <scope>NUCLEOTIDE SEQUENCE [MRNA]</scope>
    <scope>DEVELOPMENTAL STAGE</scope>
</reference>
<reference key="2">
    <citation type="journal article" date="2002" name="Dev. Dyn.">
        <title>Cloning and expression analysis of the chick DAN gene, an antagonist of the BMP family of growth factors.</title>
        <authorList>
            <person name="Gerlach-Bank L.M."/>
            <person name="Ellis A.D."/>
            <person name="Noonen B."/>
            <person name="Barald K.F."/>
        </authorList>
    </citation>
    <scope>NUCLEOTIDE SEQUENCE [MRNA]</scope>
    <scope>DEVELOPMENTAL STAGE</scope>
</reference>
<sequence>MLWFVVGALFPALLLAAPPPINKLALFPDKSAWCEAKNITQIVGHSGCESKSIQNRACLGQCFSYSVPNTFPQSTESLVHCDSCMPAQSMWEIVTLDCPGNDEIPRVDKLVEKILHCSCQACGKEPSHEGALFNVYLNAEENMPAEGPGPHHYAHHQQEVEEPPASSHHHHEEEGDE</sequence>
<protein>
    <recommendedName>
        <fullName>Neuroblastoma suppressor of tumorigenicity 1</fullName>
    </recommendedName>
    <alternativeName>
        <fullName>Cysteine knot secreted protein DAN</fullName>
        <shortName>cDAN</shortName>
    </alternativeName>
</protein>
<organism>
    <name type="scientific">Gallus gallus</name>
    <name type="common">Chicken</name>
    <dbReference type="NCBI Taxonomy" id="9031"/>
    <lineage>
        <taxon>Eukaryota</taxon>
        <taxon>Metazoa</taxon>
        <taxon>Chordata</taxon>
        <taxon>Craniata</taxon>
        <taxon>Vertebrata</taxon>
        <taxon>Euteleostomi</taxon>
        <taxon>Archelosauria</taxon>
        <taxon>Archosauria</taxon>
        <taxon>Dinosauria</taxon>
        <taxon>Saurischia</taxon>
        <taxon>Theropoda</taxon>
        <taxon>Coelurosauria</taxon>
        <taxon>Aves</taxon>
        <taxon>Neognathae</taxon>
        <taxon>Galloanserae</taxon>
        <taxon>Galliformes</taxon>
        <taxon>Phasianidae</taxon>
        <taxon>Phasianinae</taxon>
        <taxon>Gallus</taxon>
    </lineage>
</organism>
<name>NBL1_CHICK</name>